<dbReference type="EC" id="2.7.1.100" evidence="1"/>
<dbReference type="EMBL" id="AE016877">
    <property type="protein sequence ID" value="AAP10952.1"/>
    <property type="molecule type" value="Genomic_DNA"/>
</dbReference>
<dbReference type="RefSeq" id="NP_833751.1">
    <property type="nucleotide sequence ID" value="NC_004722.1"/>
</dbReference>
<dbReference type="RefSeq" id="WP_000542687.1">
    <property type="nucleotide sequence ID" value="NZ_CP138336.1"/>
</dbReference>
<dbReference type="SMR" id="Q819F1"/>
<dbReference type="STRING" id="226900.BC_4033"/>
<dbReference type="KEGG" id="bce:BC4033"/>
<dbReference type="PATRIC" id="fig|226900.8.peg.4164"/>
<dbReference type="HOGENOM" id="CLU_033681_0_0_9"/>
<dbReference type="OrthoDB" id="9777791at2"/>
<dbReference type="UniPathway" id="UPA00904">
    <property type="reaction ID" value="UER00872"/>
</dbReference>
<dbReference type="Proteomes" id="UP000001417">
    <property type="component" value="Chromosome"/>
</dbReference>
<dbReference type="GO" id="GO:0005524">
    <property type="term" value="F:ATP binding"/>
    <property type="evidence" value="ECO:0007669"/>
    <property type="project" value="UniProtKB-UniRule"/>
</dbReference>
<dbReference type="GO" id="GO:0046522">
    <property type="term" value="F:S-methyl-5-thioribose kinase activity"/>
    <property type="evidence" value="ECO:0007669"/>
    <property type="project" value="UniProtKB-UniRule"/>
</dbReference>
<dbReference type="GO" id="GO:0019509">
    <property type="term" value="P:L-methionine salvage from methylthioadenosine"/>
    <property type="evidence" value="ECO:0007669"/>
    <property type="project" value="UniProtKB-UniRule"/>
</dbReference>
<dbReference type="FunFam" id="3.30.200.20:FF:000436">
    <property type="entry name" value="Methylthioribose kinase"/>
    <property type="match status" value="1"/>
</dbReference>
<dbReference type="FunFam" id="3.90.1200.10:FF:000008">
    <property type="entry name" value="Methylthioribose kinase"/>
    <property type="match status" value="1"/>
</dbReference>
<dbReference type="Gene3D" id="3.90.1200.10">
    <property type="match status" value="1"/>
</dbReference>
<dbReference type="Gene3D" id="3.30.200.20">
    <property type="entry name" value="Phosphorylase Kinase, domain 1"/>
    <property type="match status" value="1"/>
</dbReference>
<dbReference type="HAMAP" id="MF_01683">
    <property type="entry name" value="Salvage_MtnK"/>
    <property type="match status" value="1"/>
</dbReference>
<dbReference type="InterPro" id="IPR002575">
    <property type="entry name" value="Aminoglycoside_PTrfase"/>
</dbReference>
<dbReference type="InterPro" id="IPR011009">
    <property type="entry name" value="Kinase-like_dom_sf"/>
</dbReference>
<dbReference type="InterPro" id="IPR009212">
    <property type="entry name" value="Methylthioribose_kinase"/>
</dbReference>
<dbReference type="NCBIfam" id="TIGR01767">
    <property type="entry name" value="MTRK"/>
    <property type="match status" value="1"/>
</dbReference>
<dbReference type="PANTHER" id="PTHR34273">
    <property type="entry name" value="METHYLTHIORIBOSE KINASE"/>
    <property type="match status" value="1"/>
</dbReference>
<dbReference type="PANTHER" id="PTHR34273:SF2">
    <property type="entry name" value="METHYLTHIORIBOSE KINASE"/>
    <property type="match status" value="1"/>
</dbReference>
<dbReference type="Pfam" id="PF01636">
    <property type="entry name" value="APH"/>
    <property type="match status" value="1"/>
</dbReference>
<dbReference type="PIRSF" id="PIRSF031134">
    <property type="entry name" value="MTRK"/>
    <property type="match status" value="1"/>
</dbReference>
<dbReference type="SUPFAM" id="SSF56112">
    <property type="entry name" value="Protein kinase-like (PK-like)"/>
    <property type="match status" value="1"/>
</dbReference>
<protein>
    <recommendedName>
        <fullName evidence="1">Methylthioribose kinase</fullName>
        <shortName evidence="1">MTR kinase</shortName>
        <ecNumber evidence="1">2.7.1.100</ecNumber>
    </recommendedName>
</protein>
<name>MTNK_BACCR</name>
<reference key="1">
    <citation type="journal article" date="2003" name="Nature">
        <title>Genome sequence of Bacillus cereus and comparative analysis with Bacillus anthracis.</title>
        <authorList>
            <person name="Ivanova N."/>
            <person name="Sorokin A."/>
            <person name="Anderson I."/>
            <person name="Galleron N."/>
            <person name="Candelon B."/>
            <person name="Kapatral V."/>
            <person name="Bhattacharyya A."/>
            <person name="Reznik G."/>
            <person name="Mikhailova N."/>
            <person name="Lapidus A."/>
            <person name="Chu L."/>
            <person name="Mazur M."/>
            <person name="Goltsman E."/>
            <person name="Larsen N."/>
            <person name="D'Souza M."/>
            <person name="Walunas T."/>
            <person name="Grechkin Y."/>
            <person name="Pusch G."/>
            <person name="Haselkorn R."/>
            <person name="Fonstein M."/>
            <person name="Ehrlich S.D."/>
            <person name="Overbeek R."/>
            <person name="Kyrpides N.C."/>
        </authorList>
    </citation>
    <scope>NUCLEOTIDE SEQUENCE [LARGE SCALE GENOMIC DNA]</scope>
    <source>
        <strain>ATCC 14579 / DSM 31 / CCUG 7414 / JCM 2152 / NBRC 15305 / NCIMB 9373 / NCTC 2599 / NRRL B-3711</strain>
    </source>
</reference>
<gene>
    <name evidence="1" type="primary">mtnK</name>
    <name type="ordered locus">BC_4033</name>
</gene>
<sequence length="393" mass="44973">MGYYSLTEITAVQYAKDYGYFEEKANVICHEIGDGNLNYVFKLDDGEKSIIIKQALPYAKVVGESWPLSIKRATIESKALQIFAQYVPDYVPVVYSHDEELAITVIEDLSRLTITRKGLIDGEEYPLLSQHIGRFLAHVLFYTSDFGLQSEEKRILEGTFVNPDLCKITEDLVFTDPFGHYDTNDYEPDLQLVVDELWSDKTLKLKVAQYKYKFLTRKETLIHGDLHTGSIFSSPSETKVIDPEFATYGPFGFDIGQFIANLLLNALSREEEKRSVLFFHIEKTWSYFVETFTKLWIGEGVEAYTKEKQWLPIILQNIFTDAVGFAGCELIRRTIGLAHVADLDEIENKETRIQAKKQALSLGKELIKYESKSADIQLFRTLFQQTVSRGVKA</sequence>
<evidence type="ECO:0000255" key="1">
    <source>
        <dbReference type="HAMAP-Rule" id="MF_01683"/>
    </source>
</evidence>
<feature type="chain" id="PRO_0000162914" description="Methylthioribose kinase">
    <location>
        <begin position="1"/>
        <end position="393"/>
    </location>
</feature>
<feature type="binding site" evidence="1">
    <location>
        <position position="38"/>
    </location>
    <ligand>
        <name>ATP</name>
        <dbReference type="ChEBI" id="CHEBI:30616"/>
    </ligand>
</feature>
<feature type="binding site" evidence="1">
    <location>
        <position position="53"/>
    </location>
    <ligand>
        <name>ATP</name>
        <dbReference type="ChEBI" id="CHEBI:30616"/>
    </ligand>
</feature>
<feature type="binding site" evidence="1">
    <location>
        <begin position="107"/>
        <end position="109"/>
    </location>
    <ligand>
        <name>ATP</name>
        <dbReference type="ChEBI" id="CHEBI:30616"/>
    </ligand>
</feature>
<feature type="binding site" evidence="1">
    <location>
        <position position="225"/>
    </location>
    <ligand>
        <name>substrate</name>
    </ligand>
</feature>
<feature type="binding site" evidence="1">
    <location>
        <begin position="242"/>
        <end position="244"/>
    </location>
    <ligand>
        <name>ATP</name>
        <dbReference type="ChEBI" id="CHEBI:30616"/>
    </ligand>
</feature>
<feature type="binding site" evidence="1">
    <location>
        <position position="332"/>
    </location>
    <ligand>
        <name>substrate</name>
    </ligand>
</feature>
<keyword id="KW-0028">Amino-acid biosynthesis</keyword>
<keyword id="KW-0067">ATP-binding</keyword>
<keyword id="KW-0418">Kinase</keyword>
<keyword id="KW-0486">Methionine biosynthesis</keyword>
<keyword id="KW-0547">Nucleotide-binding</keyword>
<keyword id="KW-1185">Reference proteome</keyword>
<keyword id="KW-0808">Transferase</keyword>
<accession>Q819F1</accession>
<proteinExistence type="inferred from homology"/>
<organism>
    <name type="scientific">Bacillus cereus (strain ATCC 14579 / DSM 31 / CCUG 7414 / JCM 2152 / NBRC 15305 / NCIMB 9373 / NCTC 2599 / NRRL B-3711)</name>
    <dbReference type="NCBI Taxonomy" id="226900"/>
    <lineage>
        <taxon>Bacteria</taxon>
        <taxon>Bacillati</taxon>
        <taxon>Bacillota</taxon>
        <taxon>Bacilli</taxon>
        <taxon>Bacillales</taxon>
        <taxon>Bacillaceae</taxon>
        <taxon>Bacillus</taxon>
        <taxon>Bacillus cereus group</taxon>
    </lineage>
</organism>
<comment type="function">
    <text evidence="1">Catalyzes the phosphorylation of methylthioribose into methylthioribose-1-phosphate.</text>
</comment>
<comment type="catalytic activity">
    <reaction evidence="1">
        <text>5-(methylsulfanyl)-D-ribose + ATP = 5-(methylsulfanyl)-alpha-D-ribose 1-phosphate + ADP + H(+)</text>
        <dbReference type="Rhea" id="RHEA:22312"/>
        <dbReference type="ChEBI" id="CHEBI:15378"/>
        <dbReference type="ChEBI" id="CHEBI:30616"/>
        <dbReference type="ChEBI" id="CHEBI:58533"/>
        <dbReference type="ChEBI" id="CHEBI:78440"/>
        <dbReference type="ChEBI" id="CHEBI:456216"/>
        <dbReference type="EC" id="2.7.1.100"/>
    </reaction>
</comment>
<comment type="pathway">
    <text evidence="1">Amino-acid biosynthesis; L-methionine biosynthesis via salvage pathway; S-methyl-5-thio-alpha-D-ribose 1-phosphate from S-methyl-5'-thioadenosine (hydrolase route): step 2/2.</text>
</comment>
<comment type="subunit">
    <text evidence="1">Homodimer.</text>
</comment>
<comment type="similarity">
    <text evidence="1">Belongs to the methylthioribose kinase family.</text>
</comment>